<organism>
    <name type="scientific">Streptococcus pyogenes serotype M12 (strain MGAS9429)</name>
    <dbReference type="NCBI Taxonomy" id="370551"/>
    <lineage>
        <taxon>Bacteria</taxon>
        <taxon>Bacillati</taxon>
        <taxon>Bacillota</taxon>
        <taxon>Bacilli</taxon>
        <taxon>Lactobacillales</taxon>
        <taxon>Streptococcaceae</taxon>
        <taxon>Streptococcus</taxon>
    </lineage>
</organism>
<name>FENR_STRPC</name>
<sequence length="330" mass="36148">MKDKAYDITIIGGGPIGLFAAFYAGLRGVTVKIIESLSELGGQPAILYPEKMIYDIPAYPSLTGVELTENLIKQLSRFEDRTTICLKEEVLTFDKVKGGFSIRTNKAEHFSKAIIIACGNGAFAPRTLGLESEENFADHNLFYNVHQLDQFAGQKVVICGGGDSAVDWALALEDIAESVTVVHRRDAFRAHEHSVELLKTSTVNLLTPYVPKALKGIGNLAEKLVIQKVKEDEVLELELDSLIVSFGFSTSNKNLKNWNLDYKRSSITVSPLFQTSQEGIFAIGDAAAYNGKVDLIATGFGEAPTAVNQAINYIYPDRDNRVVHSTSLID</sequence>
<dbReference type="EC" id="1.18.1.2" evidence="1"/>
<dbReference type="EMBL" id="CP000259">
    <property type="protein sequence ID" value="ABF31900.1"/>
    <property type="molecule type" value="Genomic_DNA"/>
</dbReference>
<dbReference type="RefSeq" id="WP_002990220.1">
    <property type="nucleotide sequence ID" value="NC_008021.1"/>
</dbReference>
<dbReference type="SMR" id="Q1JMB2"/>
<dbReference type="KEGG" id="spk:MGAS9429_Spy0712"/>
<dbReference type="HOGENOM" id="CLU_031864_5_5_9"/>
<dbReference type="Proteomes" id="UP000002433">
    <property type="component" value="Chromosome"/>
</dbReference>
<dbReference type="GO" id="GO:0004324">
    <property type="term" value="F:ferredoxin-NADP+ reductase activity"/>
    <property type="evidence" value="ECO:0007669"/>
    <property type="project" value="UniProtKB-UniRule"/>
</dbReference>
<dbReference type="GO" id="GO:0050660">
    <property type="term" value="F:flavin adenine dinucleotide binding"/>
    <property type="evidence" value="ECO:0007669"/>
    <property type="project" value="UniProtKB-UniRule"/>
</dbReference>
<dbReference type="GO" id="GO:0050661">
    <property type="term" value="F:NADP binding"/>
    <property type="evidence" value="ECO:0007669"/>
    <property type="project" value="UniProtKB-UniRule"/>
</dbReference>
<dbReference type="Gene3D" id="3.50.50.60">
    <property type="entry name" value="FAD/NAD(P)-binding domain"/>
    <property type="match status" value="2"/>
</dbReference>
<dbReference type="HAMAP" id="MF_01685">
    <property type="entry name" value="FENR2"/>
    <property type="match status" value="1"/>
</dbReference>
<dbReference type="InterPro" id="IPR036188">
    <property type="entry name" value="FAD/NAD-bd_sf"/>
</dbReference>
<dbReference type="InterPro" id="IPR023753">
    <property type="entry name" value="FAD/NAD-binding_dom"/>
</dbReference>
<dbReference type="InterPro" id="IPR022890">
    <property type="entry name" value="Fd--NADP_Rdtase_type_2"/>
</dbReference>
<dbReference type="InterPro" id="IPR050097">
    <property type="entry name" value="Ferredoxin-NADP_redctase_2"/>
</dbReference>
<dbReference type="PANTHER" id="PTHR48105">
    <property type="entry name" value="THIOREDOXIN REDUCTASE 1-RELATED-RELATED"/>
    <property type="match status" value="1"/>
</dbReference>
<dbReference type="Pfam" id="PF07992">
    <property type="entry name" value="Pyr_redox_2"/>
    <property type="match status" value="1"/>
</dbReference>
<dbReference type="PRINTS" id="PR00368">
    <property type="entry name" value="FADPNR"/>
</dbReference>
<dbReference type="PRINTS" id="PR00469">
    <property type="entry name" value="PNDRDTASEII"/>
</dbReference>
<dbReference type="SUPFAM" id="SSF51905">
    <property type="entry name" value="FAD/NAD(P)-binding domain"/>
    <property type="match status" value="1"/>
</dbReference>
<accession>Q1JMB2</accession>
<feature type="chain" id="PRO_0000364964" description="Ferredoxin--NADP reductase">
    <location>
        <begin position="1"/>
        <end position="330"/>
    </location>
</feature>
<feature type="binding site" evidence="1">
    <location>
        <position position="35"/>
    </location>
    <ligand>
        <name>FAD</name>
        <dbReference type="ChEBI" id="CHEBI:57692"/>
    </ligand>
</feature>
<feature type="binding site" evidence="1">
    <location>
        <position position="43"/>
    </location>
    <ligand>
        <name>FAD</name>
        <dbReference type="ChEBI" id="CHEBI:57692"/>
    </ligand>
</feature>
<feature type="binding site" evidence="1">
    <location>
        <position position="48"/>
    </location>
    <ligand>
        <name>FAD</name>
        <dbReference type="ChEBI" id="CHEBI:57692"/>
    </ligand>
</feature>
<feature type="binding site" evidence="1">
    <location>
        <position position="90"/>
    </location>
    <ligand>
        <name>FAD</name>
        <dbReference type="ChEBI" id="CHEBI:57692"/>
    </ligand>
</feature>
<feature type="binding site" evidence="1">
    <location>
        <position position="123"/>
    </location>
    <ligand>
        <name>FAD</name>
        <dbReference type="ChEBI" id="CHEBI:57692"/>
    </ligand>
</feature>
<feature type="binding site" evidence="1">
    <location>
        <position position="285"/>
    </location>
    <ligand>
        <name>FAD</name>
        <dbReference type="ChEBI" id="CHEBI:57692"/>
    </ligand>
</feature>
<feature type="binding site" evidence="1">
    <location>
        <position position="326"/>
    </location>
    <ligand>
        <name>FAD</name>
        <dbReference type="ChEBI" id="CHEBI:57692"/>
    </ligand>
</feature>
<gene>
    <name type="ordered locus">MGAS9429_Spy0712</name>
</gene>
<protein>
    <recommendedName>
        <fullName evidence="1">Ferredoxin--NADP reductase</fullName>
        <shortName evidence="1">FNR</shortName>
        <shortName evidence="1">Fd-NADP(+) reductase</shortName>
        <ecNumber evidence="1">1.18.1.2</ecNumber>
    </recommendedName>
</protein>
<keyword id="KW-0274">FAD</keyword>
<keyword id="KW-0285">Flavoprotein</keyword>
<keyword id="KW-0521">NADP</keyword>
<keyword id="KW-0560">Oxidoreductase</keyword>
<comment type="catalytic activity">
    <reaction evidence="1">
        <text>2 reduced [2Fe-2S]-[ferredoxin] + NADP(+) + H(+) = 2 oxidized [2Fe-2S]-[ferredoxin] + NADPH</text>
        <dbReference type="Rhea" id="RHEA:20125"/>
        <dbReference type="Rhea" id="RHEA-COMP:10000"/>
        <dbReference type="Rhea" id="RHEA-COMP:10001"/>
        <dbReference type="ChEBI" id="CHEBI:15378"/>
        <dbReference type="ChEBI" id="CHEBI:33737"/>
        <dbReference type="ChEBI" id="CHEBI:33738"/>
        <dbReference type="ChEBI" id="CHEBI:57783"/>
        <dbReference type="ChEBI" id="CHEBI:58349"/>
        <dbReference type="EC" id="1.18.1.2"/>
    </reaction>
</comment>
<comment type="cofactor">
    <cofactor evidence="1">
        <name>FAD</name>
        <dbReference type="ChEBI" id="CHEBI:57692"/>
    </cofactor>
    <text evidence="1">Binds 1 FAD per subunit.</text>
</comment>
<comment type="subunit">
    <text evidence="1">Homodimer.</text>
</comment>
<comment type="similarity">
    <text evidence="1">Belongs to the ferredoxin--NADP reductase type 2 family.</text>
</comment>
<proteinExistence type="inferred from homology"/>
<evidence type="ECO:0000255" key="1">
    <source>
        <dbReference type="HAMAP-Rule" id="MF_01685"/>
    </source>
</evidence>
<reference key="1">
    <citation type="journal article" date="2006" name="Proc. Natl. Acad. Sci. U.S.A.">
        <title>Molecular genetic anatomy of inter- and intraserotype variation in the human bacterial pathogen group A Streptococcus.</title>
        <authorList>
            <person name="Beres S.B."/>
            <person name="Richter E.W."/>
            <person name="Nagiec M.J."/>
            <person name="Sumby P."/>
            <person name="Porcella S.F."/>
            <person name="DeLeo F.R."/>
            <person name="Musser J.M."/>
        </authorList>
    </citation>
    <scope>NUCLEOTIDE SEQUENCE [LARGE SCALE GENOMIC DNA]</scope>
    <source>
        <strain>MGAS9429</strain>
    </source>
</reference>